<evidence type="ECO:0000255" key="1">
    <source>
        <dbReference type="HAMAP-Rule" id="MF_00527"/>
    </source>
</evidence>
<sequence>MEAIITKEFFEDKTTIELARDILGMRLVHQTDEGILSGLIVETEAYLGATDMAAHSFQNLRTKRTEVMFSSPGRIYMYQMHRQVLLNFITMPKGIPEAILIRAIEPDEQAKQQMVQNRHGKTGYELTNGPGKLTQALGLSMQDYGKTLFDSNIWLEEAKLPHLIEATNRIGVPNKGIATHFPLRFTVKGSPYISAQRKSRILTDIWK</sequence>
<reference key="1">
    <citation type="journal article" date="2004" name="Nucleic Acids Res.">
        <title>Whole genome comparisons of serotype 4b and 1/2a strains of the food-borne pathogen Listeria monocytogenes reveal new insights into the core genome components of this species.</title>
        <authorList>
            <person name="Nelson K.E."/>
            <person name="Fouts D.E."/>
            <person name="Mongodin E.F."/>
            <person name="Ravel J."/>
            <person name="DeBoy R.T."/>
            <person name="Kolonay J.F."/>
            <person name="Rasko D.A."/>
            <person name="Angiuoli S.V."/>
            <person name="Gill S.R."/>
            <person name="Paulsen I.T."/>
            <person name="Peterson J.D."/>
            <person name="White O."/>
            <person name="Nelson W.C."/>
            <person name="Nierman W.C."/>
            <person name="Beanan M.J."/>
            <person name="Brinkac L.M."/>
            <person name="Daugherty S.C."/>
            <person name="Dodson R.J."/>
            <person name="Durkin A.S."/>
            <person name="Madupu R."/>
            <person name="Haft D.H."/>
            <person name="Selengut J."/>
            <person name="Van Aken S.E."/>
            <person name="Khouri H.M."/>
            <person name="Fedorova N."/>
            <person name="Forberger H.A."/>
            <person name="Tran B."/>
            <person name="Kathariou S."/>
            <person name="Wonderling L.D."/>
            <person name="Uhlich G.A."/>
            <person name="Bayles D.O."/>
            <person name="Luchansky J.B."/>
            <person name="Fraser C.M."/>
        </authorList>
    </citation>
    <scope>NUCLEOTIDE SEQUENCE [LARGE SCALE GENOMIC DNA]</scope>
    <source>
        <strain>F2365</strain>
    </source>
</reference>
<keyword id="KW-0227">DNA damage</keyword>
<keyword id="KW-0234">DNA repair</keyword>
<keyword id="KW-0378">Hydrolase</keyword>
<name>3MGH_LISMF</name>
<comment type="similarity">
    <text evidence="1">Belongs to the DNA glycosylase MPG family.</text>
</comment>
<feature type="chain" id="PRO_0000100090" description="Putative 3-methyladenine DNA glycosylase">
    <location>
        <begin position="1"/>
        <end position="207"/>
    </location>
</feature>
<gene>
    <name type="ordered locus">LMOf2365_0949</name>
</gene>
<accession>Q721N6</accession>
<protein>
    <recommendedName>
        <fullName evidence="1">Putative 3-methyladenine DNA glycosylase</fullName>
        <ecNumber evidence="1">3.2.2.-</ecNumber>
    </recommendedName>
</protein>
<organism>
    <name type="scientific">Listeria monocytogenes serotype 4b (strain F2365)</name>
    <dbReference type="NCBI Taxonomy" id="265669"/>
    <lineage>
        <taxon>Bacteria</taxon>
        <taxon>Bacillati</taxon>
        <taxon>Bacillota</taxon>
        <taxon>Bacilli</taxon>
        <taxon>Bacillales</taxon>
        <taxon>Listeriaceae</taxon>
        <taxon>Listeria</taxon>
    </lineage>
</organism>
<dbReference type="EC" id="3.2.2.-" evidence="1"/>
<dbReference type="EMBL" id="AE017262">
    <property type="protein sequence ID" value="AAT03728.1"/>
    <property type="molecule type" value="Genomic_DNA"/>
</dbReference>
<dbReference type="RefSeq" id="WP_003724850.1">
    <property type="nucleotide sequence ID" value="NC_002973.6"/>
</dbReference>
<dbReference type="SMR" id="Q721N6"/>
<dbReference type="KEGG" id="lmf:LMOf2365_0949"/>
<dbReference type="HOGENOM" id="CLU_060471_2_0_9"/>
<dbReference type="GO" id="GO:0003905">
    <property type="term" value="F:alkylbase DNA N-glycosylase activity"/>
    <property type="evidence" value="ECO:0007669"/>
    <property type="project" value="InterPro"/>
</dbReference>
<dbReference type="GO" id="GO:0003677">
    <property type="term" value="F:DNA binding"/>
    <property type="evidence" value="ECO:0007669"/>
    <property type="project" value="InterPro"/>
</dbReference>
<dbReference type="GO" id="GO:0006284">
    <property type="term" value="P:base-excision repair"/>
    <property type="evidence" value="ECO:0007669"/>
    <property type="project" value="InterPro"/>
</dbReference>
<dbReference type="CDD" id="cd00540">
    <property type="entry name" value="AAG"/>
    <property type="match status" value="1"/>
</dbReference>
<dbReference type="FunFam" id="3.10.300.10:FF:000001">
    <property type="entry name" value="Putative 3-methyladenine DNA glycosylase"/>
    <property type="match status" value="1"/>
</dbReference>
<dbReference type="Gene3D" id="3.10.300.10">
    <property type="entry name" value="Methylpurine-DNA glycosylase (MPG)"/>
    <property type="match status" value="1"/>
</dbReference>
<dbReference type="HAMAP" id="MF_00527">
    <property type="entry name" value="3MGH"/>
    <property type="match status" value="1"/>
</dbReference>
<dbReference type="InterPro" id="IPR011034">
    <property type="entry name" value="Formyl_transferase-like_C_sf"/>
</dbReference>
<dbReference type="InterPro" id="IPR003180">
    <property type="entry name" value="MPG"/>
</dbReference>
<dbReference type="InterPro" id="IPR036995">
    <property type="entry name" value="MPG_sf"/>
</dbReference>
<dbReference type="NCBIfam" id="TIGR00567">
    <property type="entry name" value="3mg"/>
    <property type="match status" value="1"/>
</dbReference>
<dbReference type="NCBIfam" id="NF002002">
    <property type="entry name" value="PRK00802.1-2"/>
    <property type="match status" value="1"/>
</dbReference>
<dbReference type="PANTHER" id="PTHR10429">
    <property type="entry name" value="DNA-3-METHYLADENINE GLYCOSYLASE"/>
    <property type="match status" value="1"/>
</dbReference>
<dbReference type="PANTHER" id="PTHR10429:SF0">
    <property type="entry name" value="DNA-3-METHYLADENINE GLYCOSYLASE"/>
    <property type="match status" value="1"/>
</dbReference>
<dbReference type="Pfam" id="PF02245">
    <property type="entry name" value="Pur_DNA_glyco"/>
    <property type="match status" value="1"/>
</dbReference>
<dbReference type="SUPFAM" id="SSF50486">
    <property type="entry name" value="FMT C-terminal domain-like"/>
    <property type="match status" value="1"/>
</dbReference>
<proteinExistence type="inferred from homology"/>